<name>ATPE_SHESA</name>
<organism>
    <name type="scientific">Shewanella sp. (strain ANA-3)</name>
    <dbReference type="NCBI Taxonomy" id="94122"/>
    <lineage>
        <taxon>Bacteria</taxon>
        <taxon>Pseudomonadati</taxon>
        <taxon>Pseudomonadota</taxon>
        <taxon>Gammaproteobacteria</taxon>
        <taxon>Alteromonadales</taxon>
        <taxon>Shewanellaceae</taxon>
        <taxon>Shewanella</taxon>
    </lineage>
</organism>
<feature type="chain" id="PRO_1000056534" description="ATP synthase epsilon chain">
    <location>
        <begin position="1"/>
        <end position="142"/>
    </location>
</feature>
<proteinExistence type="inferred from homology"/>
<reference key="1">
    <citation type="submission" date="2006-09" db="EMBL/GenBank/DDBJ databases">
        <title>Complete sequence of chromosome 1 of Shewanella sp. ANA-3.</title>
        <authorList>
            <person name="Copeland A."/>
            <person name="Lucas S."/>
            <person name="Lapidus A."/>
            <person name="Barry K."/>
            <person name="Detter J.C."/>
            <person name="Glavina del Rio T."/>
            <person name="Hammon N."/>
            <person name="Israni S."/>
            <person name="Dalin E."/>
            <person name="Tice H."/>
            <person name="Pitluck S."/>
            <person name="Chertkov O."/>
            <person name="Brettin T."/>
            <person name="Bruce D."/>
            <person name="Han C."/>
            <person name="Tapia R."/>
            <person name="Gilna P."/>
            <person name="Schmutz J."/>
            <person name="Larimer F."/>
            <person name="Land M."/>
            <person name="Hauser L."/>
            <person name="Kyrpides N."/>
            <person name="Kim E."/>
            <person name="Newman D."/>
            <person name="Salticov C."/>
            <person name="Konstantinidis K."/>
            <person name="Klappenback J."/>
            <person name="Tiedje J."/>
            <person name="Richardson P."/>
        </authorList>
    </citation>
    <scope>NUCLEOTIDE SEQUENCE [LARGE SCALE GENOMIC DNA]</scope>
    <source>
        <strain>ANA-3</strain>
    </source>
</reference>
<comment type="function">
    <text evidence="1">Produces ATP from ADP in the presence of a proton gradient across the membrane.</text>
</comment>
<comment type="subunit">
    <text evidence="1">F-type ATPases have 2 components, CF(1) - the catalytic core - and CF(0) - the membrane proton channel. CF(1) has five subunits: alpha(3), beta(3), gamma(1), delta(1), epsilon(1). CF(0) has three main subunits: a, b and c.</text>
</comment>
<comment type="subcellular location">
    <subcellularLocation>
        <location evidence="1">Cell inner membrane</location>
        <topology evidence="1">Peripheral membrane protein</topology>
    </subcellularLocation>
</comment>
<comment type="similarity">
    <text evidence="1">Belongs to the ATPase epsilon chain family.</text>
</comment>
<gene>
    <name evidence="1" type="primary">atpC</name>
    <name type="ordered locus">Shewana3_4129</name>
</gene>
<dbReference type="EMBL" id="CP000469">
    <property type="protein sequence ID" value="ABK50346.1"/>
    <property type="molecule type" value="Genomic_DNA"/>
</dbReference>
<dbReference type="RefSeq" id="WP_011624645.1">
    <property type="nucleotide sequence ID" value="NC_008577.1"/>
</dbReference>
<dbReference type="SMR" id="A0L2S7"/>
<dbReference type="STRING" id="94122.Shewana3_4129"/>
<dbReference type="KEGG" id="shn:Shewana3_4129"/>
<dbReference type="eggNOG" id="COG0355">
    <property type="taxonomic scope" value="Bacteria"/>
</dbReference>
<dbReference type="HOGENOM" id="CLU_084338_2_0_6"/>
<dbReference type="OrthoDB" id="9791445at2"/>
<dbReference type="Proteomes" id="UP000002589">
    <property type="component" value="Chromosome"/>
</dbReference>
<dbReference type="GO" id="GO:0005886">
    <property type="term" value="C:plasma membrane"/>
    <property type="evidence" value="ECO:0007669"/>
    <property type="project" value="UniProtKB-SubCell"/>
</dbReference>
<dbReference type="GO" id="GO:0045259">
    <property type="term" value="C:proton-transporting ATP synthase complex"/>
    <property type="evidence" value="ECO:0007669"/>
    <property type="project" value="UniProtKB-KW"/>
</dbReference>
<dbReference type="GO" id="GO:0005524">
    <property type="term" value="F:ATP binding"/>
    <property type="evidence" value="ECO:0007669"/>
    <property type="project" value="UniProtKB-UniRule"/>
</dbReference>
<dbReference type="GO" id="GO:0046933">
    <property type="term" value="F:proton-transporting ATP synthase activity, rotational mechanism"/>
    <property type="evidence" value="ECO:0007669"/>
    <property type="project" value="UniProtKB-UniRule"/>
</dbReference>
<dbReference type="CDD" id="cd12152">
    <property type="entry name" value="F1-ATPase_delta"/>
    <property type="match status" value="1"/>
</dbReference>
<dbReference type="FunFam" id="1.20.5.440:FF:000001">
    <property type="entry name" value="ATP synthase epsilon chain"/>
    <property type="match status" value="1"/>
</dbReference>
<dbReference type="FunFam" id="2.60.15.10:FF:000001">
    <property type="entry name" value="ATP synthase epsilon chain"/>
    <property type="match status" value="1"/>
</dbReference>
<dbReference type="Gene3D" id="1.20.5.440">
    <property type="entry name" value="ATP synthase delta/epsilon subunit, C-terminal domain"/>
    <property type="match status" value="1"/>
</dbReference>
<dbReference type="Gene3D" id="2.60.15.10">
    <property type="entry name" value="F0F1 ATP synthase delta/epsilon subunit, N-terminal"/>
    <property type="match status" value="1"/>
</dbReference>
<dbReference type="HAMAP" id="MF_00530">
    <property type="entry name" value="ATP_synth_epsil_bac"/>
    <property type="match status" value="1"/>
</dbReference>
<dbReference type="InterPro" id="IPR036794">
    <property type="entry name" value="ATP_F1_dsu/esu_C_sf"/>
</dbReference>
<dbReference type="InterPro" id="IPR001469">
    <property type="entry name" value="ATP_synth_F1_dsu/esu"/>
</dbReference>
<dbReference type="InterPro" id="IPR020546">
    <property type="entry name" value="ATP_synth_F1_dsu/esu_N"/>
</dbReference>
<dbReference type="InterPro" id="IPR020547">
    <property type="entry name" value="ATP_synth_F1_esu_C"/>
</dbReference>
<dbReference type="InterPro" id="IPR036771">
    <property type="entry name" value="ATPsynth_dsu/esu_N"/>
</dbReference>
<dbReference type="NCBIfam" id="TIGR01216">
    <property type="entry name" value="ATP_synt_epsi"/>
    <property type="match status" value="1"/>
</dbReference>
<dbReference type="NCBIfam" id="NF001847">
    <property type="entry name" value="PRK00571.1-4"/>
    <property type="match status" value="1"/>
</dbReference>
<dbReference type="PANTHER" id="PTHR13822">
    <property type="entry name" value="ATP SYNTHASE DELTA/EPSILON CHAIN"/>
    <property type="match status" value="1"/>
</dbReference>
<dbReference type="PANTHER" id="PTHR13822:SF10">
    <property type="entry name" value="ATP SYNTHASE EPSILON CHAIN, CHLOROPLASTIC"/>
    <property type="match status" value="1"/>
</dbReference>
<dbReference type="Pfam" id="PF00401">
    <property type="entry name" value="ATP-synt_DE"/>
    <property type="match status" value="1"/>
</dbReference>
<dbReference type="Pfam" id="PF02823">
    <property type="entry name" value="ATP-synt_DE_N"/>
    <property type="match status" value="1"/>
</dbReference>
<dbReference type="SUPFAM" id="SSF46604">
    <property type="entry name" value="Epsilon subunit of F1F0-ATP synthase C-terminal domain"/>
    <property type="match status" value="1"/>
</dbReference>
<dbReference type="SUPFAM" id="SSF51344">
    <property type="entry name" value="Epsilon subunit of F1F0-ATP synthase N-terminal domain"/>
    <property type="match status" value="1"/>
</dbReference>
<keyword id="KW-0066">ATP synthesis</keyword>
<keyword id="KW-0997">Cell inner membrane</keyword>
<keyword id="KW-1003">Cell membrane</keyword>
<keyword id="KW-0139">CF(1)</keyword>
<keyword id="KW-0375">Hydrogen ion transport</keyword>
<keyword id="KW-0406">Ion transport</keyword>
<keyword id="KW-0472">Membrane</keyword>
<keyword id="KW-0813">Transport</keyword>
<evidence type="ECO:0000255" key="1">
    <source>
        <dbReference type="HAMAP-Rule" id="MF_00530"/>
    </source>
</evidence>
<accession>A0L2S7</accession>
<sequence>MAAMTVQLDIVSAESSIFSGRVASLQVTGSEGELGIMHGHAPLLSYIKPGMARIVKQDGSEEVFYLSGGLLEVQPSSVSVLADVVMRAKDIDEQAALEAKRRAEAHMATAGADFNYDAAMVELAKAMAQLRVVETIKKNIAR</sequence>
<protein>
    <recommendedName>
        <fullName evidence="1">ATP synthase epsilon chain</fullName>
    </recommendedName>
    <alternativeName>
        <fullName evidence="1">ATP synthase F1 sector epsilon subunit</fullName>
    </alternativeName>
    <alternativeName>
        <fullName evidence="1">F-ATPase epsilon subunit</fullName>
    </alternativeName>
</protein>